<comment type="function">
    <text evidence="1">Required for branched chain fatty acid synthesis. Catalyzes the reduction of the 3-ketoacyl-CoA intermediate that is formed in each cycle of fatty acid elongation. Very long-chain fatty acids (VLCFAs) serve as precursors for ceramide and sphingolipids. May also be required for sterol hormone production (By similarity).</text>
</comment>
<comment type="catalytic activity">
    <reaction>
        <text>a very-long-chain (3R)-3-hydroxyacyl-CoA + NADP(+) = a very-long-chain 3-oxoacyl-CoA + NADPH + H(+)</text>
        <dbReference type="Rhea" id="RHEA:48680"/>
        <dbReference type="ChEBI" id="CHEBI:15378"/>
        <dbReference type="ChEBI" id="CHEBI:57783"/>
        <dbReference type="ChEBI" id="CHEBI:58349"/>
        <dbReference type="ChEBI" id="CHEBI:85440"/>
        <dbReference type="ChEBI" id="CHEBI:90725"/>
        <dbReference type="EC" id="1.1.1.330"/>
    </reaction>
</comment>
<comment type="pathway">
    <text evidence="3">Lipid metabolism; fatty acid biosynthesis.</text>
</comment>
<comment type="similarity">
    <text evidence="5">Belongs to the short-chain dehydrogenases/reductases (SDR) family. 17-beta-HSD 3 subfamily.</text>
</comment>
<organism>
    <name type="scientific">Caenorhabditis briggsae</name>
    <dbReference type="NCBI Taxonomy" id="6238"/>
    <lineage>
        <taxon>Eukaryota</taxon>
        <taxon>Metazoa</taxon>
        <taxon>Ecdysozoa</taxon>
        <taxon>Nematoda</taxon>
        <taxon>Chromadorea</taxon>
        <taxon>Rhabditida</taxon>
        <taxon>Rhabditina</taxon>
        <taxon>Rhabditomorpha</taxon>
        <taxon>Rhabditoidea</taxon>
        <taxon>Rhabditidae</taxon>
        <taxon>Peloderinae</taxon>
        <taxon>Caenorhabditis</taxon>
    </lineage>
</organism>
<evidence type="ECO:0000250" key="1"/>
<evidence type="ECO:0000250" key="2">
    <source>
        <dbReference type="UniProtKB" id="P00334"/>
    </source>
</evidence>
<evidence type="ECO:0000250" key="3">
    <source>
        <dbReference type="UniProtKB" id="Q09517"/>
    </source>
</evidence>
<evidence type="ECO:0000255" key="4">
    <source>
        <dbReference type="PROSITE-ProRule" id="PRU10001"/>
    </source>
</evidence>
<evidence type="ECO:0000305" key="5"/>
<name>LE767_CAEBR</name>
<sequence>MACQCFLVGAGYVALAAVAYRILTIFSNILGPYVLLSPIDLKKRAGASWAVITGATDGIGKAYAFELARRGFNVFIVSRTQSKLDETKKEILEKYPNIEVRTAAYDFTNAAPSGYKNLLETLNKVEIGVLVNNVGLSYEYPDVLHKVDGGIERLANITTINTLPPTLLSAGILPQMVARKAGVIVNVGSSASANQMALWAVYSATKKYVSWLTAILRKEYEHQGITIQTIAPMMVATKMSKVKRTSFFTPDGATFAKSALNTVGNSSDTTGYITHQLQLEVMDLIPTFIRDKILTNMSVGTRAAALRKKEREAKAQ</sequence>
<dbReference type="EC" id="1.1.1.330"/>
<dbReference type="EMBL" id="HE600934">
    <property type="protein sequence ID" value="CAP36899.1"/>
    <property type="molecule type" value="Genomic_DNA"/>
</dbReference>
<dbReference type="SMR" id="Q60V51"/>
<dbReference type="FunCoup" id="Q60V51">
    <property type="interactions" value="2306"/>
</dbReference>
<dbReference type="STRING" id="6238.Q60V51"/>
<dbReference type="EnsemblMetazoa" id="CBG19695.1">
    <property type="protein sequence ID" value="CBG19695.1"/>
    <property type="gene ID" value="WBGene00038870"/>
</dbReference>
<dbReference type="KEGG" id="cbr:CBG_19695"/>
<dbReference type="CTD" id="8576702"/>
<dbReference type="WormBase" id="CBG19695">
    <property type="protein sequence ID" value="CBP04589"/>
    <property type="gene ID" value="WBGene00038870"/>
    <property type="gene designation" value="Cbr-let-767"/>
</dbReference>
<dbReference type="eggNOG" id="KOG1014">
    <property type="taxonomic scope" value="Eukaryota"/>
</dbReference>
<dbReference type="HOGENOM" id="CLU_010194_38_0_1"/>
<dbReference type="InParanoid" id="Q60V51"/>
<dbReference type="OMA" id="LVAPGMM"/>
<dbReference type="UniPathway" id="UPA00094"/>
<dbReference type="Proteomes" id="UP000008549">
    <property type="component" value="Unassembled WGS sequence"/>
</dbReference>
<dbReference type="GO" id="GO:0045179">
    <property type="term" value="C:apical cortex"/>
    <property type="evidence" value="ECO:0007669"/>
    <property type="project" value="EnsemblMetazoa"/>
</dbReference>
<dbReference type="GO" id="GO:0005783">
    <property type="term" value="C:endoplasmic reticulum"/>
    <property type="evidence" value="ECO:0000318"/>
    <property type="project" value="GO_Central"/>
</dbReference>
<dbReference type="GO" id="GO:0050062">
    <property type="term" value="F:long-chain-fatty-acyl-CoA reductase activity"/>
    <property type="evidence" value="ECO:0007669"/>
    <property type="project" value="EnsemblMetazoa"/>
</dbReference>
<dbReference type="GO" id="GO:0030283">
    <property type="term" value="F:testosterone dehydrogenase [NAD(P)+] activity"/>
    <property type="evidence" value="ECO:0007669"/>
    <property type="project" value="EnsemblMetazoa"/>
</dbReference>
<dbReference type="GO" id="GO:0141040">
    <property type="term" value="F:very-long-chain 3-oxoacyl-CoA reductase activity"/>
    <property type="evidence" value="ECO:0007669"/>
    <property type="project" value="UniProtKB-EC"/>
</dbReference>
<dbReference type="GO" id="GO:0008209">
    <property type="term" value="P:androgen metabolic process"/>
    <property type="evidence" value="ECO:0007669"/>
    <property type="project" value="EnsemblMetazoa"/>
</dbReference>
<dbReference type="GO" id="GO:0032502">
    <property type="term" value="P:developmental process"/>
    <property type="evidence" value="ECO:0000250"/>
    <property type="project" value="UniProtKB"/>
</dbReference>
<dbReference type="GO" id="GO:0045197">
    <property type="term" value="P:establishment or maintenance of epithelial cell apical/basal polarity"/>
    <property type="evidence" value="ECO:0007669"/>
    <property type="project" value="EnsemblMetazoa"/>
</dbReference>
<dbReference type="GO" id="GO:0008210">
    <property type="term" value="P:estrogen metabolic process"/>
    <property type="evidence" value="ECO:0007669"/>
    <property type="project" value="EnsemblMetazoa"/>
</dbReference>
<dbReference type="GO" id="GO:0030497">
    <property type="term" value="P:fatty acid elongation"/>
    <property type="evidence" value="ECO:0000318"/>
    <property type="project" value="GO_Central"/>
</dbReference>
<dbReference type="GO" id="GO:0042445">
    <property type="term" value="P:hormone metabolic process"/>
    <property type="evidence" value="ECO:0000250"/>
    <property type="project" value="UniProtKB"/>
</dbReference>
<dbReference type="GO" id="GO:0042759">
    <property type="term" value="P:long-chain fatty acid biosynthetic process"/>
    <property type="evidence" value="ECO:0007669"/>
    <property type="project" value="EnsemblMetazoa"/>
</dbReference>
<dbReference type="GO" id="GO:0018996">
    <property type="term" value="P:molting cycle, collagen and cuticulin-based cuticle"/>
    <property type="evidence" value="ECO:0007669"/>
    <property type="project" value="EnsemblMetazoa"/>
</dbReference>
<dbReference type="GO" id="GO:0006694">
    <property type="term" value="P:steroid biosynthetic process"/>
    <property type="evidence" value="ECO:0007669"/>
    <property type="project" value="UniProtKB-KW"/>
</dbReference>
<dbReference type="CDD" id="cd05356">
    <property type="entry name" value="17beta-HSD1_like_SDR_c"/>
    <property type="match status" value="1"/>
</dbReference>
<dbReference type="FunFam" id="3.40.50.720:FF:000467">
    <property type="entry name" value="Steroid dehydrogenase 4"/>
    <property type="match status" value="1"/>
</dbReference>
<dbReference type="Gene3D" id="3.40.50.720">
    <property type="entry name" value="NAD(P)-binding Rossmann-like Domain"/>
    <property type="match status" value="1"/>
</dbReference>
<dbReference type="InterPro" id="IPR036291">
    <property type="entry name" value="NAD(P)-bd_dom_sf"/>
</dbReference>
<dbReference type="InterPro" id="IPR020904">
    <property type="entry name" value="Sc_DH/Rdtase_CS"/>
</dbReference>
<dbReference type="InterPro" id="IPR002347">
    <property type="entry name" value="SDR_fam"/>
</dbReference>
<dbReference type="PANTHER" id="PTHR43086:SF2">
    <property type="entry name" value="HYDROXYSTEROID DEHYDROGENASE-LIKE PROTEIN 1"/>
    <property type="match status" value="1"/>
</dbReference>
<dbReference type="PANTHER" id="PTHR43086">
    <property type="entry name" value="VERY-LONG-CHAIN 3-OXOOACYL-COA REDUCTASE"/>
    <property type="match status" value="1"/>
</dbReference>
<dbReference type="Pfam" id="PF00106">
    <property type="entry name" value="adh_short"/>
    <property type="match status" value="1"/>
</dbReference>
<dbReference type="PIRSF" id="PIRSF000126">
    <property type="entry name" value="11-beta-HSD1"/>
    <property type="match status" value="1"/>
</dbReference>
<dbReference type="PRINTS" id="PR00081">
    <property type="entry name" value="GDHRDH"/>
</dbReference>
<dbReference type="PRINTS" id="PR00080">
    <property type="entry name" value="SDRFAMILY"/>
</dbReference>
<dbReference type="SUPFAM" id="SSF51735">
    <property type="entry name" value="NAD(P)-binding Rossmann-fold domains"/>
    <property type="match status" value="1"/>
</dbReference>
<dbReference type="PROSITE" id="PS00061">
    <property type="entry name" value="ADH_SHORT"/>
    <property type="match status" value="1"/>
</dbReference>
<accession>Q60V51</accession>
<accession>A8XW80</accession>
<reference key="1">
    <citation type="journal article" date="2003" name="PLoS Biol.">
        <title>The genome sequence of Caenorhabditis briggsae: a platform for comparative genomics.</title>
        <authorList>
            <person name="Stein L.D."/>
            <person name="Bao Z."/>
            <person name="Blasiar D."/>
            <person name="Blumenthal T."/>
            <person name="Brent M.R."/>
            <person name="Chen N."/>
            <person name="Chinwalla A."/>
            <person name="Clarke L."/>
            <person name="Clee C."/>
            <person name="Coghlan A."/>
            <person name="Coulson A."/>
            <person name="D'Eustachio P."/>
            <person name="Fitch D.H.A."/>
            <person name="Fulton L.A."/>
            <person name="Fulton R.E."/>
            <person name="Griffiths-Jones S."/>
            <person name="Harris T.W."/>
            <person name="Hillier L.W."/>
            <person name="Kamath R."/>
            <person name="Kuwabara P.E."/>
            <person name="Mardis E.R."/>
            <person name="Marra M.A."/>
            <person name="Miner T.L."/>
            <person name="Minx P."/>
            <person name="Mullikin J.C."/>
            <person name="Plumb R.W."/>
            <person name="Rogers J."/>
            <person name="Schein J.E."/>
            <person name="Sohrmann M."/>
            <person name="Spieth J."/>
            <person name="Stajich J.E."/>
            <person name="Wei C."/>
            <person name="Willey D."/>
            <person name="Wilson R.K."/>
            <person name="Durbin R.M."/>
            <person name="Waterston R.H."/>
        </authorList>
    </citation>
    <scope>NUCLEOTIDE SEQUENCE [LARGE SCALE GENOMIC DNA]</scope>
    <source>
        <strain>AF16</strain>
    </source>
</reference>
<feature type="chain" id="PRO_0000280225" description="Very-long-chain 3-oxooacyl-coA reductase let-767">
    <location>
        <begin position="1"/>
        <end position="316"/>
    </location>
</feature>
<feature type="active site" description="Proton acceptor" evidence="2 4">
    <location>
        <position position="202"/>
    </location>
</feature>
<feature type="binding site" evidence="1">
    <location>
        <begin position="52"/>
        <end position="80"/>
    </location>
    <ligand>
        <name>NADP(+)</name>
        <dbReference type="ChEBI" id="CHEBI:58349"/>
    </ligand>
</feature>
<feature type="binding site" evidence="1">
    <location>
        <position position="106"/>
    </location>
    <ligand>
        <name>NADP(+)</name>
        <dbReference type="ChEBI" id="CHEBI:58349"/>
    </ligand>
</feature>
<feature type="binding site" evidence="2">
    <location>
        <position position="189"/>
    </location>
    <ligand>
        <name>substrate</name>
    </ligand>
</feature>
<feature type="binding site" evidence="1">
    <location>
        <position position="206"/>
    </location>
    <ligand>
        <name>NADP(+)</name>
        <dbReference type="ChEBI" id="CHEBI:58349"/>
    </ligand>
</feature>
<keyword id="KW-0275">Fatty acid biosynthesis</keyword>
<keyword id="KW-0276">Fatty acid metabolism</keyword>
<keyword id="KW-0444">Lipid biosynthesis</keyword>
<keyword id="KW-0443">Lipid metabolism</keyword>
<keyword id="KW-0521">NADP</keyword>
<keyword id="KW-0560">Oxidoreductase</keyword>
<keyword id="KW-1185">Reference proteome</keyword>
<keyword id="KW-0752">Steroid biosynthesis</keyword>
<gene>
    <name evidence="3" type="primary">let-767</name>
    <name type="ORF">CBG19695</name>
</gene>
<proteinExistence type="inferred from homology"/>
<protein>
    <recommendedName>
        <fullName>Very-long-chain 3-oxooacyl-coA reductase let-767</fullName>
        <ecNumber>1.1.1.330</ecNumber>
    </recommendedName>
    <alternativeName>
        <fullName>Lethal protein 767</fullName>
    </alternativeName>
</protein>